<name>MACD2_MOUSE</name>
<protein>
    <recommendedName>
        <fullName evidence="5">ADP-ribose glycohydrolase MACROD2</fullName>
    </recommendedName>
    <alternativeName>
        <fullName>MACRO domain-containing protein 2</fullName>
    </alternativeName>
    <alternativeName>
        <fullName evidence="5">O-acetyl-ADP-ribose deacetylase MACROD2</fullName>
        <ecNumber evidence="1">3.5.1.-</ecNumber>
    </alternativeName>
    <alternativeName>
        <fullName evidence="5">[Protein ADP-ribosylaspartate] hydrolase MACROD2</fullName>
        <ecNumber evidence="1">3.2.2.-</ecNumber>
    </alternativeName>
    <alternativeName>
        <fullName evidence="5">[Protein ADP-ribosylglutamate] hydrolase MACROD2</fullName>
        <ecNumber evidence="1">3.2.2.-</ecNumber>
    </alternativeName>
</protein>
<sequence length="475" mass="52145">MYPSNKKKKVWREEKERLLKMTLEERRKEYIRDYVSLSTILSWKEEMKSKGQNDEENTQEAPQMKKSLSEKVSLYRGDITLLEVDAIVNAANASLLGGGGVDGCIHRAAGPCLLAECRNLNGCETGHAKITCGYDLPAKYVIHTVGPIARGHINGSHKEDLANCYQSSLKLVKENNLRSVAFPCISTGIYGFPNEPAAVIALGTIKEWLAKNHQEVDRIIFCVFLEVDFKIYKKKMNEFFPVDDNNEGTDADMKEDSEGPEPKGLSPPHKKSKAKKPESSKDSSEDESGPEEKQTAEEMEGQSQEAGGLRFLLRNLLGLIHRDGVNTTPVPSPASEDKAEVHKDEDSAKDDNTVKDSDMTNHSVCDQELPNGQENDSAKSEGKTEAESPSSSMETEDLSPNQEDAAIVEQPEVIPLIDDQEAQEGGEAQGKDAPAVFAESQGSSEAENTSGPDVDMNSQVDGVNEPTESLQEDLQ</sequence>
<reference key="1">
    <citation type="journal article" date="2005" name="Science">
        <title>The transcriptional landscape of the mammalian genome.</title>
        <authorList>
            <person name="Carninci P."/>
            <person name="Kasukawa T."/>
            <person name="Katayama S."/>
            <person name="Gough J."/>
            <person name="Frith M.C."/>
            <person name="Maeda N."/>
            <person name="Oyama R."/>
            <person name="Ravasi T."/>
            <person name="Lenhard B."/>
            <person name="Wells C."/>
            <person name="Kodzius R."/>
            <person name="Shimokawa K."/>
            <person name="Bajic V.B."/>
            <person name="Brenner S.E."/>
            <person name="Batalov S."/>
            <person name="Forrest A.R."/>
            <person name="Zavolan M."/>
            <person name="Davis M.J."/>
            <person name="Wilming L.G."/>
            <person name="Aidinis V."/>
            <person name="Allen J.E."/>
            <person name="Ambesi-Impiombato A."/>
            <person name="Apweiler R."/>
            <person name="Aturaliya R.N."/>
            <person name="Bailey T.L."/>
            <person name="Bansal M."/>
            <person name="Baxter L."/>
            <person name="Beisel K.W."/>
            <person name="Bersano T."/>
            <person name="Bono H."/>
            <person name="Chalk A.M."/>
            <person name="Chiu K.P."/>
            <person name="Choudhary V."/>
            <person name="Christoffels A."/>
            <person name="Clutterbuck D.R."/>
            <person name="Crowe M.L."/>
            <person name="Dalla E."/>
            <person name="Dalrymple B.P."/>
            <person name="de Bono B."/>
            <person name="Della Gatta G."/>
            <person name="di Bernardo D."/>
            <person name="Down T."/>
            <person name="Engstrom P."/>
            <person name="Fagiolini M."/>
            <person name="Faulkner G."/>
            <person name="Fletcher C.F."/>
            <person name="Fukushima T."/>
            <person name="Furuno M."/>
            <person name="Futaki S."/>
            <person name="Gariboldi M."/>
            <person name="Georgii-Hemming P."/>
            <person name="Gingeras T.R."/>
            <person name="Gojobori T."/>
            <person name="Green R.E."/>
            <person name="Gustincich S."/>
            <person name="Harbers M."/>
            <person name="Hayashi Y."/>
            <person name="Hensch T.K."/>
            <person name="Hirokawa N."/>
            <person name="Hill D."/>
            <person name="Huminiecki L."/>
            <person name="Iacono M."/>
            <person name="Ikeo K."/>
            <person name="Iwama A."/>
            <person name="Ishikawa T."/>
            <person name="Jakt M."/>
            <person name="Kanapin A."/>
            <person name="Katoh M."/>
            <person name="Kawasawa Y."/>
            <person name="Kelso J."/>
            <person name="Kitamura H."/>
            <person name="Kitano H."/>
            <person name="Kollias G."/>
            <person name="Krishnan S.P."/>
            <person name="Kruger A."/>
            <person name="Kummerfeld S.K."/>
            <person name="Kurochkin I.V."/>
            <person name="Lareau L.F."/>
            <person name="Lazarevic D."/>
            <person name="Lipovich L."/>
            <person name="Liu J."/>
            <person name="Liuni S."/>
            <person name="McWilliam S."/>
            <person name="Madan Babu M."/>
            <person name="Madera M."/>
            <person name="Marchionni L."/>
            <person name="Matsuda H."/>
            <person name="Matsuzawa S."/>
            <person name="Miki H."/>
            <person name="Mignone F."/>
            <person name="Miyake S."/>
            <person name="Morris K."/>
            <person name="Mottagui-Tabar S."/>
            <person name="Mulder N."/>
            <person name="Nakano N."/>
            <person name="Nakauchi H."/>
            <person name="Ng P."/>
            <person name="Nilsson R."/>
            <person name="Nishiguchi S."/>
            <person name="Nishikawa S."/>
            <person name="Nori F."/>
            <person name="Ohara O."/>
            <person name="Okazaki Y."/>
            <person name="Orlando V."/>
            <person name="Pang K.C."/>
            <person name="Pavan W.J."/>
            <person name="Pavesi G."/>
            <person name="Pesole G."/>
            <person name="Petrovsky N."/>
            <person name="Piazza S."/>
            <person name="Reed J."/>
            <person name="Reid J.F."/>
            <person name="Ring B.Z."/>
            <person name="Ringwald M."/>
            <person name="Rost B."/>
            <person name="Ruan Y."/>
            <person name="Salzberg S.L."/>
            <person name="Sandelin A."/>
            <person name="Schneider C."/>
            <person name="Schoenbach C."/>
            <person name="Sekiguchi K."/>
            <person name="Semple C.A."/>
            <person name="Seno S."/>
            <person name="Sessa L."/>
            <person name="Sheng Y."/>
            <person name="Shibata Y."/>
            <person name="Shimada H."/>
            <person name="Shimada K."/>
            <person name="Silva D."/>
            <person name="Sinclair B."/>
            <person name="Sperling S."/>
            <person name="Stupka E."/>
            <person name="Sugiura K."/>
            <person name="Sultana R."/>
            <person name="Takenaka Y."/>
            <person name="Taki K."/>
            <person name="Tammoja K."/>
            <person name="Tan S.L."/>
            <person name="Tang S."/>
            <person name="Taylor M.S."/>
            <person name="Tegner J."/>
            <person name="Teichmann S.A."/>
            <person name="Ueda H.R."/>
            <person name="van Nimwegen E."/>
            <person name="Verardo R."/>
            <person name="Wei C.L."/>
            <person name="Yagi K."/>
            <person name="Yamanishi H."/>
            <person name="Zabarovsky E."/>
            <person name="Zhu S."/>
            <person name="Zimmer A."/>
            <person name="Hide W."/>
            <person name="Bult C."/>
            <person name="Grimmond S.M."/>
            <person name="Teasdale R.D."/>
            <person name="Liu E.T."/>
            <person name="Brusic V."/>
            <person name="Quackenbush J."/>
            <person name="Wahlestedt C."/>
            <person name="Mattick J.S."/>
            <person name="Hume D.A."/>
            <person name="Kai C."/>
            <person name="Sasaki D."/>
            <person name="Tomaru Y."/>
            <person name="Fukuda S."/>
            <person name="Kanamori-Katayama M."/>
            <person name="Suzuki M."/>
            <person name="Aoki J."/>
            <person name="Arakawa T."/>
            <person name="Iida J."/>
            <person name="Imamura K."/>
            <person name="Itoh M."/>
            <person name="Kato T."/>
            <person name="Kawaji H."/>
            <person name="Kawagashira N."/>
            <person name="Kawashima T."/>
            <person name="Kojima M."/>
            <person name="Kondo S."/>
            <person name="Konno H."/>
            <person name="Nakano K."/>
            <person name="Ninomiya N."/>
            <person name="Nishio T."/>
            <person name="Okada M."/>
            <person name="Plessy C."/>
            <person name="Shibata K."/>
            <person name="Shiraki T."/>
            <person name="Suzuki S."/>
            <person name="Tagami M."/>
            <person name="Waki K."/>
            <person name="Watahiki A."/>
            <person name="Okamura-Oho Y."/>
            <person name="Suzuki H."/>
            <person name="Kawai J."/>
            <person name="Hayashizaki Y."/>
        </authorList>
    </citation>
    <scope>NUCLEOTIDE SEQUENCE [LARGE SCALE MRNA]</scope>
    <source>
        <strain>C57BL/6J</strain>
        <tissue>Medulla oblongata</tissue>
    </source>
</reference>
<reference key="2">
    <citation type="journal article" date="2009" name="PLoS Biol.">
        <title>Lineage-specific biology revealed by a finished genome assembly of the mouse.</title>
        <authorList>
            <person name="Church D.M."/>
            <person name="Goodstadt L."/>
            <person name="Hillier L.W."/>
            <person name="Zody M.C."/>
            <person name="Goldstein S."/>
            <person name="She X."/>
            <person name="Bult C.J."/>
            <person name="Agarwala R."/>
            <person name="Cherry J.L."/>
            <person name="DiCuccio M."/>
            <person name="Hlavina W."/>
            <person name="Kapustin Y."/>
            <person name="Meric P."/>
            <person name="Maglott D."/>
            <person name="Birtle Z."/>
            <person name="Marques A.C."/>
            <person name="Graves T."/>
            <person name="Zhou S."/>
            <person name="Teague B."/>
            <person name="Potamousis K."/>
            <person name="Churas C."/>
            <person name="Place M."/>
            <person name="Herschleb J."/>
            <person name="Runnheim R."/>
            <person name="Forrest D."/>
            <person name="Amos-Landgraf J."/>
            <person name="Schwartz D.C."/>
            <person name="Cheng Z."/>
            <person name="Lindblad-Toh K."/>
            <person name="Eichler E.E."/>
            <person name="Ponting C.P."/>
        </authorList>
    </citation>
    <scope>NUCLEOTIDE SEQUENCE [LARGE SCALE GENOMIC DNA]</scope>
    <source>
        <strain>C57BL/6J</strain>
    </source>
</reference>
<reference key="3">
    <citation type="journal article" date="2007" name="J. Med. Genet.">
        <title>The C20orf133 gene is disrupted in a patient with Kabuki syndrome.</title>
        <authorList>
            <person name="Maas N.M.C."/>
            <person name="Van de Putte T."/>
            <person name="Melotte C."/>
            <person name="Francis A."/>
            <person name="Schrander-Stumpel C.T.R.M."/>
            <person name="Sanlaville D."/>
            <person name="Genevieve D."/>
            <person name="Lyonnet S."/>
            <person name="Dimitrov B."/>
            <person name="Devriendt K."/>
            <person name="Fryns J.-P."/>
            <person name="Vermeesch J.R."/>
        </authorList>
    </citation>
    <scope>TISSUE SPECIFICITY</scope>
    <scope>DEVELOPMENTAL STAGE</scope>
</reference>
<reference key="4">
    <citation type="journal article" date="2010" name="Cell">
        <title>A tissue-specific atlas of mouse protein phosphorylation and expression.</title>
        <authorList>
            <person name="Huttlin E.L."/>
            <person name="Jedrychowski M.P."/>
            <person name="Elias J.E."/>
            <person name="Goswami T."/>
            <person name="Rad R."/>
            <person name="Beausoleil S.A."/>
            <person name="Villen J."/>
            <person name="Haas W."/>
            <person name="Sowa M.E."/>
            <person name="Gygi S.P."/>
        </authorList>
    </citation>
    <scope>IDENTIFICATION BY MASS SPECTROMETRY [LARGE SCALE ANALYSIS]</scope>
    <source>
        <tissue>Brain</tissue>
    </source>
</reference>
<organism>
    <name type="scientific">Mus musculus</name>
    <name type="common">Mouse</name>
    <dbReference type="NCBI Taxonomy" id="10090"/>
    <lineage>
        <taxon>Eukaryota</taxon>
        <taxon>Metazoa</taxon>
        <taxon>Chordata</taxon>
        <taxon>Craniata</taxon>
        <taxon>Vertebrata</taxon>
        <taxon>Euteleostomi</taxon>
        <taxon>Mammalia</taxon>
        <taxon>Eutheria</taxon>
        <taxon>Euarchontoglires</taxon>
        <taxon>Glires</taxon>
        <taxon>Rodentia</taxon>
        <taxon>Myomorpha</taxon>
        <taxon>Muroidea</taxon>
        <taxon>Muridae</taxon>
        <taxon>Murinae</taxon>
        <taxon>Mus</taxon>
        <taxon>Mus</taxon>
    </lineage>
</organism>
<feature type="chain" id="PRO_0000300462" description="ADP-ribose glycohydrolase MACROD2">
    <location>
        <begin position="1"/>
        <end position="475"/>
    </location>
</feature>
<feature type="domain" description="Macro" evidence="2">
    <location>
        <begin position="59"/>
        <end position="240"/>
    </location>
</feature>
<feature type="region of interest" description="Disordered" evidence="3">
    <location>
        <begin position="241"/>
        <end position="306"/>
    </location>
</feature>
<feature type="region of interest" description="Disordered" evidence="3">
    <location>
        <begin position="324"/>
        <end position="475"/>
    </location>
</feature>
<feature type="compositionally biased region" description="Basic and acidic residues" evidence="3">
    <location>
        <begin position="251"/>
        <end position="261"/>
    </location>
</feature>
<feature type="compositionally biased region" description="Basic and acidic residues" evidence="3">
    <location>
        <begin position="335"/>
        <end position="359"/>
    </location>
</feature>
<feature type="compositionally biased region" description="Polar residues" evidence="3">
    <location>
        <begin position="360"/>
        <end position="375"/>
    </location>
</feature>
<feature type="compositionally biased region" description="Basic and acidic residues" evidence="3">
    <location>
        <begin position="376"/>
        <end position="386"/>
    </location>
</feature>
<feature type="compositionally biased region" description="Polar residues" evidence="3">
    <location>
        <begin position="387"/>
        <end position="402"/>
    </location>
</feature>
<feature type="compositionally biased region" description="Polar residues" evidence="3">
    <location>
        <begin position="440"/>
        <end position="469"/>
    </location>
</feature>
<feature type="binding site" evidence="1">
    <location>
        <begin position="77"/>
        <end position="79"/>
    </location>
    <ligand>
        <name>substrate</name>
    </ligand>
</feature>
<feature type="binding site" evidence="1">
    <location>
        <begin position="90"/>
        <end position="92"/>
    </location>
    <ligand>
        <name>substrate</name>
    </ligand>
</feature>
<feature type="binding site" evidence="1">
    <location>
        <begin position="97"/>
        <end position="102"/>
    </location>
    <ligand>
        <name>substrate</name>
    </ligand>
</feature>
<feature type="binding site" evidence="1">
    <location>
        <begin position="185"/>
        <end position="191"/>
    </location>
    <ligand>
        <name>substrate</name>
    </ligand>
</feature>
<feature type="binding site" evidence="1">
    <location>
        <position position="224"/>
    </location>
    <ligand>
        <name>substrate</name>
    </ligand>
</feature>
<feature type="cross-link" description="Glycyl lysine isopeptide (Lys-Gly) (interchain with G-Cter in ubiquitin)" evidence="1">
    <location>
        <position position="170"/>
    </location>
</feature>
<keyword id="KW-0227">DNA damage</keyword>
<keyword id="KW-0378">Hydrolase</keyword>
<keyword id="KW-1017">Isopeptide bond</keyword>
<keyword id="KW-0539">Nucleus</keyword>
<keyword id="KW-1185">Reference proteome</keyword>
<keyword id="KW-0832">Ubl conjugation</keyword>
<proteinExistence type="evidence at protein level"/>
<evidence type="ECO:0000250" key="1">
    <source>
        <dbReference type="UniProtKB" id="A1Z1Q3"/>
    </source>
</evidence>
<evidence type="ECO:0000255" key="2">
    <source>
        <dbReference type="PROSITE-ProRule" id="PRU00490"/>
    </source>
</evidence>
<evidence type="ECO:0000256" key="3">
    <source>
        <dbReference type="SAM" id="MobiDB-lite"/>
    </source>
</evidence>
<evidence type="ECO:0000269" key="4">
    <source>
    </source>
</evidence>
<evidence type="ECO:0000305" key="5"/>
<evidence type="ECO:0000312" key="6">
    <source>
        <dbReference type="MGI" id="MGI:1920149"/>
    </source>
</evidence>
<dbReference type="EC" id="3.5.1.-" evidence="1"/>
<dbReference type="EC" id="3.2.2.-" evidence="1"/>
<dbReference type="EMBL" id="AK134694">
    <property type="protein sequence ID" value="BAE22244.1"/>
    <property type="molecule type" value="mRNA"/>
</dbReference>
<dbReference type="EMBL" id="AL731795">
    <property type="status" value="NOT_ANNOTATED_CDS"/>
    <property type="molecule type" value="Genomic_DNA"/>
</dbReference>
<dbReference type="EMBL" id="AL837516">
    <property type="status" value="NOT_ANNOTATED_CDS"/>
    <property type="molecule type" value="Genomic_DNA"/>
</dbReference>
<dbReference type="EMBL" id="AL844562">
    <property type="status" value="NOT_ANNOTATED_CDS"/>
    <property type="molecule type" value="Genomic_DNA"/>
</dbReference>
<dbReference type="EMBL" id="AL844582">
    <property type="status" value="NOT_ANNOTATED_CDS"/>
    <property type="molecule type" value="Genomic_DNA"/>
</dbReference>
<dbReference type="EMBL" id="AL845530">
    <property type="status" value="NOT_ANNOTATED_CDS"/>
    <property type="molecule type" value="Genomic_DNA"/>
</dbReference>
<dbReference type="EMBL" id="AL928823">
    <property type="status" value="NOT_ANNOTATED_CDS"/>
    <property type="molecule type" value="Genomic_DNA"/>
</dbReference>
<dbReference type="EMBL" id="AL929027">
    <property type="status" value="NOT_ANNOTATED_CDS"/>
    <property type="molecule type" value="Genomic_DNA"/>
</dbReference>
<dbReference type="EMBL" id="AL929443">
    <property type="status" value="NOT_ANNOTATED_CDS"/>
    <property type="molecule type" value="Genomic_DNA"/>
</dbReference>
<dbReference type="CCDS" id="CCDS50733.1"/>
<dbReference type="RefSeq" id="NP_001013824.2">
    <property type="nucleotide sequence ID" value="NM_001013802.4"/>
</dbReference>
<dbReference type="SMR" id="Q3UYG8"/>
<dbReference type="FunCoup" id="Q3UYG8">
    <property type="interactions" value="1744"/>
</dbReference>
<dbReference type="STRING" id="10090.ENSMUSP00000105691"/>
<dbReference type="GlyGen" id="Q3UYG8">
    <property type="glycosylation" value="2 sites, 2 N-linked glycans (2 sites)"/>
</dbReference>
<dbReference type="iPTMnet" id="Q3UYG8"/>
<dbReference type="PhosphoSitePlus" id="Q3UYG8"/>
<dbReference type="PaxDb" id="10090-ENSMUSP00000105691"/>
<dbReference type="PeptideAtlas" id="Q3UYG8"/>
<dbReference type="ProteomicsDB" id="295759"/>
<dbReference type="Antibodypedia" id="62792">
    <property type="antibodies" value="23 antibodies from 8 providers"/>
</dbReference>
<dbReference type="DNASU" id="72899"/>
<dbReference type="Ensembl" id="ENSMUST00000078027.12">
    <property type="protein sequence ID" value="ENSMUSP00000077174.6"/>
    <property type="gene ID" value="ENSMUSG00000068205.15"/>
</dbReference>
<dbReference type="Ensembl" id="ENSMUST00000110064.8">
    <property type="protein sequence ID" value="ENSMUSP00000105691.2"/>
    <property type="gene ID" value="ENSMUSG00000068205.15"/>
</dbReference>
<dbReference type="GeneID" id="72899"/>
<dbReference type="KEGG" id="mmu:72899"/>
<dbReference type="UCSC" id="uc008mpv.1">
    <property type="organism name" value="mouse"/>
</dbReference>
<dbReference type="AGR" id="MGI:1920149"/>
<dbReference type="CTD" id="140733"/>
<dbReference type="MGI" id="MGI:1920149">
    <property type="gene designation" value="Macrod2"/>
</dbReference>
<dbReference type="VEuPathDB" id="HostDB:ENSMUSG00000068205"/>
<dbReference type="eggNOG" id="KOG2633">
    <property type="taxonomic scope" value="Eukaryota"/>
</dbReference>
<dbReference type="GeneTree" id="ENSGT00940000157404"/>
<dbReference type="InParanoid" id="Q3UYG8"/>
<dbReference type="OMA" id="XAFPCIS"/>
<dbReference type="OrthoDB" id="6133115at2759"/>
<dbReference type="PhylomeDB" id="Q3UYG8"/>
<dbReference type="TreeFam" id="TF341440"/>
<dbReference type="BioGRID-ORCS" id="72899">
    <property type="hits" value="3 hits in 74 CRISPR screens"/>
</dbReference>
<dbReference type="ChiTaRS" id="Macrod2">
    <property type="organism name" value="mouse"/>
</dbReference>
<dbReference type="PRO" id="PR:Q3UYG8"/>
<dbReference type="Proteomes" id="UP000000589">
    <property type="component" value="Chromosome 2"/>
</dbReference>
<dbReference type="RNAct" id="Q3UYG8">
    <property type="molecule type" value="protein"/>
</dbReference>
<dbReference type="Bgee" id="ENSMUSG00000068205">
    <property type="expression patterns" value="Expressed in primary oocyte and 235 other cell types or tissues"/>
</dbReference>
<dbReference type="ExpressionAtlas" id="Q3UYG8">
    <property type="expression patterns" value="baseline and differential"/>
</dbReference>
<dbReference type="GO" id="GO:0005730">
    <property type="term" value="C:nucleolus"/>
    <property type="evidence" value="ECO:0007669"/>
    <property type="project" value="Ensembl"/>
</dbReference>
<dbReference type="GO" id="GO:0005654">
    <property type="term" value="C:nucleoplasm"/>
    <property type="evidence" value="ECO:0007669"/>
    <property type="project" value="Ensembl"/>
</dbReference>
<dbReference type="GO" id="GO:0005634">
    <property type="term" value="C:nucleus"/>
    <property type="evidence" value="ECO:0000250"/>
    <property type="project" value="UniProtKB"/>
</dbReference>
<dbReference type="GO" id="GO:0140293">
    <property type="term" value="F:ADP-ribosylglutamate hydrolase activity"/>
    <property type="evidence" value="ECO:0000250"/>
    <property type="project" value="UniProtKB"/>
</dbReference>
<dbReference type="GO" id="GO:0016798">
    <property type="term" value="F:hydrolase activity, acting on glycosyl bonds"/>
    <property type="evidence" value="ECO:0000250"/>
    <property type="project" value="UniProtKB"/>
</dbReference>
<dbReference type="GO" id="GO:0061463">
    <property type="term" value="F:O-acetyl-ADP-ribose deacetylase activity"/>
    <property type="evidence" value="ECO:0007669"/>
    <property type="project" value="RHEA"/>
</dbReference>
<dbReference type="GO" id="GO:0007420">
    <property type="term" value="P:brain development"/>
    <property type="evidence" value="ECO:0000270"/>
    <property type="project" value="UniProtKB"/>
</dbReference>
<dbReference type="GO" id="GO:0006974">
    <property type="term" value="P:DNA damage response"/>
    <property type="evidence" value="ECO:0000250"/>
    <property type="project" value="UniProtKB"/>
</dbReference>
<dbReference type="GO" id="GO:0140291">
    <property type="term" value="P:peptidyl-glutamate ADP-deribosylation"/>
    <property type="evidence" value="ECO:0000250"/>
    <property type="project" value="UniProtKB"/>
</dbReference>
<dbReference type="GO" id="GO:0051725">
    <property type="term" value="P:protein de-ADP-ribosylation"/>
    <property type="evidence" value="ECO:0000250"/>
    <property type="project" value="UniProtKB"/>
</dbReference>
<dbReference type="GO" id="GO:0042278">
    <property type="term" value="P:purine nucleoside metabolic process"/>
    <property type="evidence" value="ECO:0007669"/>
    <property type="project" value="Ensembl"/>
</dbReference>
<dbReference type="GO" id="GO:0009617">
    <property type="term" value="P:response to bacterium"/>
    <property type="evidence" value="ECO:0000270"/>
    <property type="project" value="MGI"/>
</dbReference>
<dbReference type="CDD" id="cd02908">
    <property type="entry name" value="Macro_OAADPr_deacetylase"/>
    <property type="match status" value="1"/>
</dbReference>
<dbReference type="FunFam" id="3.40.220.10:FF:000003">
    <property type="entry name" value="O-acetyl-ADP-ribose deacetylase MACROD2"/>
    <property type="match status" value="1"/>
</dbReference>
<dbReference type="Gene3D" id="3.40.220.10">
    <property type="entry name" value="Leucine Aminopeptidase, subunit E, domain 1"/>
    <property type="match status" value="1"/>
</dbReference>
<dbReference type="InterPro" id="IPR002589">
    <property type="entry name" value="Macro_dom"/>
</dbReference>
<dbReference type="InterPro" id="IPR043472">
    <property type="entry name" value="Macro_dom-like"/>
</dbReference>
<dbReference type="NCBIfam" id="NF001664">
    <property type="entry name" value="PRK00431.1-6"/>
    <property type="match status" value="1"/>
</dbReference>
<dbReference type="PANTHER" id="PTHR11106:SF104">
    <property type="entry name" value="ADP-RIBOSE GLYCOHYDROLASE MACROD2"/>
    <property type="match status" value="1"/>
</dbReference>
<dbReference type="PANTHER" id="PTHR11106">
    <property type="entry name" value="GANGLIOSIDE INDUCED DIFFERENTIATION ASSOCIATED PROTEIN 2-RELATED"/>
    <property type="match status" value="1"/>
</dbReference>
<dbReference type="Pfam" id="PF01661">
    <property type="entry name" value="Macro"/>
    <property type="match status" value="1"/>
</dbReference>
<dbReference type="SMART" id="SM00506">
    <property type="entry name" value="A1pp"/>
    <property type="match status" value="1"/>
</dbReference>
<dbReference type="SUPFAM" id="SSF52949">
    <property type="entry name" value="Macro domain-like"/>
    <property type="match status" value="1"/>
</dbReference>
<dbReference type="PROSITE" id="PS51154">
    <property type="entry name" value="MACRO"/>
    <property type="match status" value="1"/>
</dbReference>
<comment type="function">
    <text evidence="1">Removes ADP-ribose from aspartate and glutamate residues in proteins bearing a single ADP-ribose moiety. Inactive towards proteins bearing poly-ADP-ribose. Deacetylates O-acetyl-ADP ribose, a signaling molecule generated by the deacetylation of acetylated lysine residues in histones and other proteins.</text>
</comment>
<comment type="catalytic activity">
    <reaction evidence="1">
        <text>2''-O-acetyl-ADP-D-ribose + H2O = ADP-D-ribose + acetate + H(+)</text>
        <dbReference type="Rhea" id="RHEA:57060"/>
        <dbReference type="ChEBI" id="CHEBI:15377"/>
        <dbReference type="ChEBI" id="CHEBI:15378"/>
        <dbReference type="ChEBI" id="CHEBI:30089"/>
        <dbReference type="ChEBI" id="CHEBI:57967"/>
        <dbReference type="ChEBI" id="CHEBI:83767"/>
    </reaction>
</comment>
<comment type="catalytic activity">
    <reaction evidence="1">
        <text>4-O-(ADP-D-ribosyl)-L-aspartyl-[protein] + H2O = L-aspartyl-[protein] + ADP-D-ribose + H(+)</text>
        <dbReference type="Rhea" id="RHEA:54428"/>
        <dbReference type="Rhea" id="RHEA-COMP:9867"/>
        <dbReference type="Rhea" id="RHEA-COMP:13832"/>
        <dbReference type="ChEBI" id="CHEBI:15377"/>
        <dbReference type="ChEBI" id="CHEBI:15378"/>
        <dbReference type="ChEBI" id="CHEBI:29961"/>
        <dbReference type="ChEBI" id="CHEBI:57967"/>
        <dbReference type="ChEBI" id="CHEBI:138102"/>
    </reaction>
</comment>
<comment type="catalytic activity">
    <reaction evidence="1">
        <text>5-O-(ADP-D-ribosyl)-L-glutamyl-[protein] + H2O = L-glutamyl-[protein] + ADP-D-ribose + H(+)</text>
        <dbReference type="Rhea" id="RHEA:58248"/>
        <dbReference type="Rhea" id="RHEA-COMP:10208"/>
        <dbReference type="Rhea" id="RHEA-COMP:15089"/>
        <dbReference type="ChEBI" id="CHEBI:15377"/>
        <dbReference type="ChEBI" id="CHEBI:15378"/>
        <dbReference type="ChEBI" id="CHEBI:29973"/>
        <dbReference type="ChEBI" id="CHEBI:57967"/>
        <dbReference type="ChEBI" id="CHEBI:142540"/>
    </reaction>
</comment>
<comment type="catalytic activity">
    <reaction evidence="1">
        <text>alpha-NAD(+) + H2O = ADP-D-ribose + nicotinamide + H(+)</text>
        <dbReference type="Rhea" id="RHEA:68792"/>
        <dbReference type="ChEBI" id="CHEBI:15377"/>
        <dbReference type="ChEBI" id="CHEBI:15378"/>
        <dbReference type="ChEBI" id="CHEBI:17154"/>
        <dbReference type="ChEBI" id="CHEBI:57967"/>
        <dbReference type="ChEBI" id="CHEBI:77017"/>
    </reaction>
</comment>
<comment type="activity regulation">
    <text evidence="1">Subject to product inhibition by ADP-ribose.</text>
</comment>
<comment type="subunit">
    <text evidence="1">Interacts with ADP-ribosylated PARP1.</text>
</comment>
<comment type="subcellular location">
    <subcellularLocation>
        <location evidence="1">Nucleus</location>
    </subcellularLocation>
    <text evidence="1">Recruited to DNA lesions, probably via mono-APD-ribosylated proteins.</text>
</comment>
<comment type="tissue specificity">
    <text evidence="4">Expressed in the kidney.</text>
</comment>
<comment type="developmental stage">
    <text evidence="4">At 12.5 dpc, expressed in the neural tube and in the dorsal root and cranial ganglia. At 14.5 dpc, expressed in metanephric glomeruli, but not in the medullary region of the kidney, in the epithelium lining the gut, the stomach and the seminiferous tubules, as well as in lung. Expression is maintained in the dorsal root and cranial ganglia. In the cranial region, up-regulated in the epithelial and mesenchymal components of the tooth bud, in the epithelium lining the primitive nasal cavity, the vestibulocochlear and cochlear ducts and in the cranial ganglia. At 16.5 dpc, expression is maintained in kidney and lung. Detected in the papilla of the whisker follicle. In the eye, highly expressed in the cuboid epithelium of the lens and the inner nuclear (neuroblastic) layer of the retina. Expression begins in the brain, in particular the ventricular zone, and in the heart. At 18.5 dpc, expression is maintained in the brain, including the subventricular zone of striatum and olfactory lobe, the cortical plate, the cerebellar primordium and the inferior colliculus of the tectum. At this stage, the expression in the heart is 45 times lower than in the brain. At birth, still detectable in the metanephric glomeruli, but not in the adrenal gland.</text>
</comment>
<comment type="similarity">
    <text evidence="5">Belongs to the MacroD-type family. MacroD1/2-like subfamily.</text>
</comment>
<gene>
    <name evidence="6" type="primary">Macrod2</name>
</gene>
<accession>Q3UYG8</accession>